<gene>
    <name type="primary">PER24</name>
    <name type="synonym">P24</name>
    <name type="ordered locus">At2g39040</name>
    <name type="ORF">T7F6.21</name>
</gene>
<keyword id="KW-0106">Calcium</keyword>
<keyword id="KW-1015">Disulfide bond</keyword>
<keyword id="KW-0325">Glycoprotein</keyword>
<keyword id="KW-0349">Heme</keyword>
<keyword id="KW-0376">Hydrogen peroxide</keyword>
<keyword id="KW-0408">Iron</keyword>
<keyword id="KW-0479">Metal-binding</keyword>
<keyword id="KW-0560">Oxidoreductase</keyword>
<keyword id="KW-0575">Peroxidase</keyword>
<keyword id="KW-1185">Reference proteome</keyword>
<keyword id="KW-0964">Secreted</keyword>
<keyword id="KW-0732">Signal</keyword>
<protein>
    <recommendedName>
        <fullName>Peroxidase 24</fullName>
        <shortName>Atperox P24</shortName>
        <ecNumber>1.11.1.7</ecNumber>
    </recommendedName>
    <alternativeName>
        <fullName>ATP47</fullName>
    </alternativeName>
</protein>
<feature type="signal peptide" evidence="1">
    <location>
        <begin position="1"/>
        <end position="27"/>
    </location>
</feature>
<feature type="chain" id="PRO_0000023690" description="Peroxidase 24">
    <location>
        <begin position="28"/>
        <end position="350"/>
    </location>
</feature>
<feature type="active site" description="Proton acceptor">
    <location>
        <position position="86"/>
    </location>
</feature>
<feature type="binding site" evidence="2">
    <location>
        <position position="87"/>
    </location>
    <ligand>
        <name>Ca(2+)</name>
        <dbReference type="ChEBI" id="CHEBI:29108"/>
        <label>1</label>
    </ligand>
</feature>
<feature type="binding site" evidence="2">
    <location>
        <position position="90"/>
    </location>
    <ligand>
        <name>Ca(2+)</name>
        <dbReference type="ChEBI" id="CHEBI:29108"/>
        <label>1</label>
    </ligand>
</feature>
<feature type="binding site" evidence="2">
    <location>
        <position position="92"/>
    </location>
    <ligand>
        <name>Ca(2+)</name>
        <dbReference type="ChEBI" id="CHEBI:29108"/>
        <label>1</label>
    </ligand>
</feature>
<feature type="binding site" evidence="2">
    <location>
        <position position="94"/>
    </location>
    <ligand>
        <name>Ca(2+)</name>
        <dbReference type="ChEBI" id="CHEBI:29108"/>
        <label>1</label>
    </ligand>
</feature>
<feature type="binding site" evidence="2">
    <location>
        <position position="96"/>
    </location>
    <ligand>
        <name>Ca(2+)</name>
        <dbReference type="ChEBI" id="CHEBI:29108"/>
        <label>1</label>
    </ligand>
</feature>
<feature type="binding site" evidence="2">
    <location>
        <position position="184"/>
    </location>
    <ligand>
        <name>substrate</name>
    </ligand>
</feature>
<feature type="binding site" description="axial binding residue" evidence="2">
    <location>
        <position position="214"/>
    </location>
    <ligand>
        <name>heme b</name>
        <dbReference type="ChEBI" id="CHEBI:60344"/>
    </ligand>
    <ligandPart>
        <name>Fe</name>
        <dbReference type="ChEBI" id="CHEBI:18248"/>
    </ligandPart>
</feature>
<feature type="binding site" evidence="2">
    <location>
        <position position="215"/>
    </location>
    <ligand>
        <name>Ca(2+)</name>
        <dbReference type="ChEBI" id="CHEBI:29108"/>
        <label>2</label>
    </ligand>
</feature>
<feature type="binding site" evidence="2">
    <location>
        <position position="269"/>
    </location>
    <ligand>
        <name>Ca(2+)</name>
        <dbReference type="ChEBI" id="CHEBI:29108"/>
        <label>2</label>
    </ligand>
</feature>
<feature type="binding site" evidence="2">
    <location>
        <position position="277"/>
    </location>
    <ligand>
        <name>Ca(2+)</name>
        <dbReference type="ChEBI" id="CHEBI:29108"/>
        <label>2</label>
    </ligand>
</feature>
<feature type="site" description="Transition state stabilizer" evidence="2">
    <location>
        <position position="82"/>
    </location>
</feature>
<feature type="glycosylation site" description="N-linked (GlcNAc...) asparagine" evidence="1">
    <location>
        <position position="73"/>
    </location>
</feature>
<feature type="glycosylation site" description="N-linked (GlcNAc...) asparagine" evidence="1">
    <location>
        <position position="189"/>
    </location>
</feature>
<feature type="glycosylation site" description="N-linked (GlcNAc...) asparagine" evidence="1">
    <location>
        <position position="230"/>
    </location>
</feature>
<feature type="disulfide bond" evidence="2">
    <location>
        <begin position="55"/>
        <end position="135"/>
    </location>
</feature>
<feature type="disulfide bond" evidence="2">
    <location>
        <begin position="88"/>
        <end position="93"/>
    </location>
</feature>
<feature type="disulfide bond" evidence="2">
    <location>
        <begin position="141"/>
        <end position="346"/>
    </location>
</feature>
<feature type="disulfide bond" evidence="2">
    <location>
        <begin position="221"/>
        <end position="253"/>
    </location>
</feature>
<sequence length="350" mass="38237">MANKSLEIRFLFPLVLFLVVKLLCVDGKGFNNNGHKIRKGRWEGKLKMNFYHNSCPGAEDIVRQIVWKKVEANRSLAPKLLRVHYHDCFVRGCDASLLLDSVAGKAVSEKEARPNLSLSGFEIIDEIKYILEKRCPNTVSCADILTLAARDAVSYEFERPLWNVFTGRVDGRVSLATEAARDLPSAGANFTTLQKLFAESDLDVVDLVALSGAHTIGIAHCGVFGRRLLNFTGKGDTDPSLNPSYASFLKSECSDKSLRLNPSAVVGMDPTGPLAFDSGYFVSLLKNKGLFTSDAALLTDPSAAHIASVFQNSGAFLAQFGRSMIKMSSIKVLTLGDQGGEIRKNCRLVN</sequence>
<evidence type="ECO:0000255" key="1"/>
<evidence type="ECO:0000255" key="2">
    <source>
        <dbReference type="PROSITE-ProRule" id="PRU00297"/>
    </source>
</evidence>
<evidence type="ECO:0000269" key="3">
    <source>
    </source>
</evidence>
<organism>
    <name type="scientific">Arabidopsis thaliana</name>
    <name type="common">Mouse-ear cress</name>
    <dbReference type="NCBI Taxonomy" id="3702"/>
    <lineage>
        <taxon>Eukaryota</taxon>
        <taxon>Viridiplantae</taxon>
        <taxon>Streptophyta</taxon>
        <taxon>Embryophyta</taxon>
        <taxon>Tracheophyta</taxon>
        <taxon>Spermatophyta</taxon>
        <taxon>Magnoliopsida</taxon>
        <taxon>eudicotyledons</taxon>
        <taxon>Gunneridae</taxon>
        <taxon>Pentapetalae</taxon>
        <taxon>rosids</taxon>
        <taxon>malvids</taxon>
        <taxon>Brassicales</taxon>
        <taxon>Brassicaceae</taxon>
        <taxon>Camelineae</taxon>
        <taxon>Arabidopsis</taxon>
    </lineage>
</organism>
<comment type="function">
    <text>Removal of H(2)O(2), oxidation of toxic reductants, biosynthesis and degradation of lignin, suberization, auxin catabolism, response to environmental stresses such as wounding, pathogen attack and oxidative stress. These functions might be dependent on each isozyme/isoform in each plant tissue.</text>
</comment>
<comment type="catalytic activity">
    <reaction>
        <text>2 a phenolic donor + H2O2 = 2 a phenolic radical donor + 2 H2O</text>
        <dbReference type="Rhea" id="RHEA:56136"/>
        <dbReference type="ChEBI" id="CHEBI:15377"/>
        <dbReference type="ChEBI" id="CHEBI:16240"/>
        <dbReference type="ChEBI" id="CHEBI:139520"/>
        <dbReference type="ChEBI" id="CHEBI:139521"/>
        <dbReference type="EC" id="1.11.1.7"/>
    </reaction>
</comment>
<comment type="cofactor">
    <cofactor evidence="2">
        <name>heme b</name>
        <dbReference type="ChEBI" id="CHEBI:60344"/>
    </cofactor>
    <text evidence="2">Binds 1 heme b (iron(II)-protoporphyrin IX) group per subunit.</text>
</comment>
<comment type="cofactor">
    <cofactor evidence="2">
        <name>Ca(2+)</name>
        <dbReference type="ChEBI" id="CHEBI:29108"/>
    </cofactor>
    <text evidence="2">Binds 2 calcium ions per subunit.</text>
</comment>
<comment type="subcellular location">
    <subcellularLocation>
        <location evidence="2">Secreted</location>
    </subcellularLocation>
</comment>
<comment type="induction">
    <text evidence="3">Up-regulated transiently by a cold treatment.</text>
</comment>
<comment type="miscellaneous">
    <text>There are 73 peroxidase genes in A.thaliana.</text>
</comment>
<comment type="similarity">
    <text evidence="2">Belongs to the peroxidase family. Classical plant (class III) peroxidase subfamily.</text>
</comment>
<proteinExistence type="evidence at transcript level"/>
<accession>Q9ZV04</accession>
<accession>Q0V7W8</accession>
<dbReference type="EC" id="1.11.1.7"/>
<dbReference type="EMBL" id="AC005770">
    <property type="protein sequence ID" value="AAC79614.1"/>
    <property type="molecule type" value="Genomic_DNA"/>
</dbReference>
<dbReference type="EMBL" id="CP002685">
    <property type="protein sequence ID" value="AEC09629.1"/>
    <property type="molecule type" value="Genomic_DNA"/>
</dbReference>
<dbReference type="EMBL" id="BT026452">
    <property type="protein sequence ID" value="ABH04559.1"/>
    <property type="molecule type" value="mRNA"/>
</dbReference>
<dbReference type="PIR" id="D84812">
    <property type="entry name" value="D84812"/>
</dbReference>
<dbReference type="RefSeq" id="NP_181437.1">
    <property type="nucleotide sequence ID" value="NM_129461.3"/>
</dbReference>
<dbReference type="SMR" id="Q9ZV04"/>
<dbReference type="FunCoup" id="Q9ZV04">
    <property type="interactions" value="302"/>
</dbReference>
<dbReference type="STRING" id="3702.Q9ZV04"/>
<dbReference type="PeroxiBase" id="117">
    <property type="entry name" value="AtPrx24"/>
</dbReference>
<dbReference type="GlyCosmos" id="Q9ZV04">
    <property type="glycosylation" value="3 sites, No reported glycans"/>
</dbReference>
<dbReference type="GlyGen" id="Q9ZV04">
    <property type="glycosylation" value="3 sites"/>
</dbReference>
<dbReference type="PaxDb" id="3702-AT2G39040.1"/>
<dbReference type="ProteomicsDB" id="234830"/>
<dbReference type="EnsemblPlants" id="AT2G39040.1">
    <property type="protein sequence ID" value="AT2G39040.1"/>
    <property type="gene ID" value="AT2G39040"/>
</dbReference>
<dbReference type="GeneID" id="818490"/>
<dbReference type="Gramene" id="AT2G39040.1">
    <property type="protein sequence ID" value="AT2G39040.1"/>
    <property type="gene ID" value="AT2G39040"/>
</dbReference>
<dbReference type="KEGG" id="ath:AT2G39040"/>
<dbReference type="Araport" id="AT2G39040"/>
<dbReference type="TAIR" id="AT2G39040"/>
<dbReference type="eggNOG" id="ENOG502QTB3">
    <property type="taxonomic scope" value="Eukaryota"/>
</dbReference>
<dbReference type="HOGENOM" id="CLU_010543_0_3_1"/>
<dbReference type="InParanoid" id="Q9ZV04"/>
<dbReference type="OMA" id="SYQFGRP"/>
<dbReference type="PhylomeDB" id="Q9ZV04"/>
<dbReference type="BioCyc" id="ARA:AT2G39040-MONOMER"/>
<dbReference type="PRO" id="PR:Q9ZV04"/>
<dbReference type="Proteomes" id="UP000006548">
    <property type="component" value="Chromosome 2"/>
</dbReference>
<dbReference type="ExpressionAtlas" id="Q9ZV04">
    <property type="expression patterns" value="baseline and differential"/>
</dbReference>
<dbReference type="GO" id="GO:0005576">
    <property type="term" value="C:extracellular region"/>
    <property type="evidence" value="ECO:0007669"/>
    <property type="project" value="UniProtKB-SubCell"/>
</dbReference>
<dbReference type="GO" id="GO:0020037">
    <property type="term" value="F:heme binding"/>
    <property type="evidence" value="ECO:0007669"/>
    <property type="project" value="InterPro"/>
</dbReference>
<dbReference type="GO" id="GO:0140825">
    <property type="term" value="F:lactoperoxidase activity"/>
    <property type="evidence" value="ECO:0007669"/>
    <property type="project" value="UniProtKB-EC"/>
</dbReference>
<dbReference type="GO" id="GO:0046872">
    <property type="term" value="F:metal ion binding"/>
    <property type="evidence" value="ECO:0007669"/>
    <property type="project" value="UniProtKB-KW"/>
</dbReference>
<dbReference type="GO" id="GO:0042744">
    <property type="term" value="P:hydrogen peroxide catabolic process"/>
    <property type="evidence" value="ECO:0007669"/>
    <property type="project" value="UniProtKB-KW"/>
</dbReference>
<dbReference type="GO" id="GO:0006979">
    <property type="term" value="P:response to oxidative stress"/>
    <property type="evidence" value="ECO:0007669"/>
    <property type="project" value="InterPro"/>
</dbReference>
<dbReference type="CDD" id="cd00693">
    <property type="entry name" value="secretory_peroxidase"/>
    <property type="match status" value="1"/>
</dbReference>
<dbReference type="FunFam" id="1.10.420.10:FF:000001">
    <property type="entry name" value="Peroxidase"/>
    <property type="match status" value="1"/>
</dbReference>
<dbReference type="FunFam" id="1.10.520.10:FF:000006">
    <property type="entry name" value="Peroxidase"/>
    <property type="match status" value="1"/>
</dbReference>
<dbReference type="Gene3D" id="1.10.520.10">
    <property type="match status" value="1"/>
</dbReference>
<dbReference type="Gene3D" id="1.10.420.10">
    <property type="entry name" value="Peroxidase, domain 2"/>
    <property type="match status" value="1"/>
</dbReference>
<dbReference type="InterPro" id="IPR002016">
    <property type="entry name" value="Haem_peroxidase"/>
</dbReference>
<dbReference type="InterPro" id="IPR010255">
    <property type="entry name" value="Haem_peroxidase_sf"/>
</dbReference>
<dbReference type="InterPro" id="IPR000823">
    <property type="entry name" value="Peroxidase_pln"/>
</dbReference>
<dbReference type="InterPro" id="IPR019793">
    <property type="entry name" value="Peroxidases_heam-ligand_BS"/>
</dbReference>
<dbReference type="InterPro" id="IPR033905">
    <property type="entry name" value="Secretory_peroxidase"/>
</dbReference>
<dbReference type="PANTHER" id="PTHR31235">
    <property type="entry name" value="PEROXIDASE 25-RELATED"/>
    <property type="match status" value="1"/>
</dbReference>
<dbReference type="Pfam" id="PF00141">
    <property type="entry name" value="peroxidase"/>
    <property type="match status" value="1"/>
</dbReference>
<dbReference type="PRINTS" id="PR00458">
    <property type="entry name" value="PEROXIDASE"/>
</dbReference>
<dbReference type="PRINTS" id="PR00461">
    <property type="entry name" value="PLPEROXIDASE"/>
</dbReference>
<dbReference type="SUPFAM" id="SSF48113">
    <property type="entry name" value="Heme-dependent peroxidases"/>
    <property type="match status" value="1"/>
</dbReference>
<dbReference type="PROSITE" id="PS00435">
    <property type="entry name" value="PEROXIDASE_1"/>
    <property type="match status" value="1"/>
</dbReference>
<dbReference type="PROSITE" id="PS50873">
    <property type="entry name" value="PEROXIDASE_4"/>
    <property type="match status" value="1"/>
</dbReference>
<name>PER24_ARATH</name>
<reference key="1">
    <citation type="journal article" date="1999" name="Nature">
        <title>Sequence and analysis of chromosome 2 of the plant Arabidopsis thaliana.</title>
        <authorList>
            <person name="Lin X."/>
            <person name="Kaul S."/>
            <person name="Rounsley S.D."/>
            <person name="Shea T.P."/>
            <person name="Benito M.-I."/>
            <person name="Town C.D."/>
            <person name="Fujii C.Y."/>
            <person name="Mason T.M."/>
            <person name="Bowman C.L."/>
            <person name="Barnstead M.E."/>
            <person name="Feldblyum T.V."/>
            <person name="Buell C.R."/>
            <person name="Ketchum K.A."/>
            <person name="Lee J.J."/>
            <person name="Ronning C.M."/>
            <person name="Koo H.L."/>
            <person name="Moffat K.S."/>
            <person name="Cronin L.A."/>
            <person name="Shen M."/>
            <person name="Pai G."/>
            <person name="Van Aken S."/>
            <person name="Umayam L."/>
            <person name="Tallon L.J."/>
            <person name="Gill J.E."/>
            <person name="Adams M.D."/>
            <person name="Carrera A.J."/>
            <person name="Creasy T.H."/>
            <person name="Goodman H.M."/>
            <person name="Somerville C.R."/>
            <person name="Copenhaver G.P."/>
            <person name="Preuss D."/>
            <person name="Nierman W.C."/>
            <person name="White O."/>
            <person name="Eisen J.A."/>
            <person name="Salzberg S.L."/>
            <person name="Fraser C.M."/>
            <person name="Venter J.C."/>
        </authorList>
    </citation>
    <scope>NUCLEOTIDE SEQUENCE [LARGE SCALE GENOMIC DNA]</scope>
    <source>
        <strain>cv. Columbia</strain>
    </source>
</reference>
<reference key="2">
    <citation type="journal article" date="2017" name="Plant J.">
        <title>Araport11: a complete reannotation of the Arabidopsis thaliana reference genome.</title>
        <authorList>
            <person name="Cheng C.Y."/>
            <person name="Krishnakumar V."/>
            <person name="Chan A.P."/>
            <person name="Thibaud-Nissen F."/>
            <person name="Schobel S."/>
            <person name="Town C.D."/>
        </authorList>
    </citation>
    <scope>GENOME REANNOTATION</scope>
    <source>
        <strain>cv. Columbia</strain>
    </source>
</reference>
<reference key="3">
    <citation type="submission" date="2006-08" db="EMBL/GenBank/DDBJ databases">
        <title>Arabidopsis ORF clones.</title>
        <authorList>
            <person name="Quinitio C."/>
            <person name="Chen H."/>
            <person name="Kim C.J."/>
            <person name="Shinn P."/>
            <person name="Ecker J.R."/>
        </authorList>
    </citation>
    <scope>NUCLEOTIDE SEQUENCE [LARGE SCALE MRNA]</scope>
    <source>
        <strain>cv. Columbia</strain>
    </source>
</reference>
<reference key="4">
    <citation type="journal article" date="2002" name="Plant Cell">
        <title>Arabidopsis transcriptome profiling indicates that multiple regulatory pathways are activated during cold acclimation in addition to the CBF cold response pathway.</title>
        <authorList>
            <person name="Fowler S."/>
            <person name="Thomashow M.F."/>
        </authorList>
    </citation>
    <scope>INDUCTION</scope>
    <source>
        <strain>cv. Columbia</strain>
    </source>
</reference>
<reference key="5">
    <citation type="journal article" date="2002" name="Gene">
        <title>Analysis and expression of the class III peroxidase large gene family in Arabidopsis thaliana.</title>
        <authorList>
            <person name="Tognolli M."/>
            <person name="Penel C."/>
            <person name="Greppin H."/>
            <person name="Simon P."/>
        </authorList>
    </citation>
    <scope>GENE FAMILY ORGANIZATION</scope>
    <scope>NOMENCLATURE</scope>
    <source>
        <strain>cv. Columbia</strain>
    </source>
</reference>